<name>HIS51_VIBVY</name>
<accession>Q7MLS3</accession>
<gene>
    <name type="primary">hisH1</name>
    <name type="ordered locus">VV1354</name>
</gene>
<organism>
    <name type="scientific">Vibrio vulnificus (strain YJ016)</name>
    <dbReference type="NCBI Taxonomy" id="196600"/>
    <lineage>
        <taxon>Bacteria</taxon>
        <taxon>Pseudomonadati</taxon>
        <taxon>Pseudomonadota</taxon>
        <taxon>Gammaproteobacteria</taxon>
        <taxon>Vibrionales</taxon>
        <taxon>Vibrionaceae</taxon>
        <taxon>Vibrio</taxon>
    </lineage>
</organism>
<reference key="1">
    <citation type="journal article" date="2003" name="Genome Res.">
        <title>Comparative genome analysis of Vibrio vulnificus, a marine pathogen.</title>
        <authorList>
            <person name="Chen C.-Y."/>
            <person name="Wu K.-M."/>
            <person name="Chang Y.-C."/>
            <person name="Chang C.-H."/>
            <person name="Tsai H.-C."/>
            <person name="Liao T.-L."/>
            <person name="Liu Y.-M."/>
            <person name="Chen H.-J."/>
            <person name="Shen A.B.-T."/>
            <person name="Li J.-C."/>
            <person name="Su T.-L."/>
            <person name="Shao C.-P."/>
            <person name="Lee C.-T."/>
            <person name="Hor L.-I."/>
            <person name="Tsai S.-F."/>
        </authorList>
    </citation>
    <scope>NUCLEOTIDE SEQUENCE [LARGE SCALE GENOMIC DNA]</scope>
    <source>
        <strain>YJ016</strain>
    </source>
</reference>
<keyword id="KW-0028">Amino-acid biosynthesis</keyword>
<keyword id="KW-0963">Cytoplasm</keyword>
<keyword id="KW-0315">Glutamine amidotransferase</keyword>
<keyword id="KW-0368">Histidine biosynthesis</keyword>
<keyword id="KW-0378">Hydrolase</keyword>
<keyword id="KW-0456">Lyase</keyword>
<proteinExistence type="inferred from homology"/>
<evidence type="ECO:0000250" key="1"/>
<protein>
    <recommendedName>
        <fullName>Imidazole glycerol phosphate synthase subunit HisH 1</fullName>
        <ecNumber>4.3.2.10</ecNumber>
    </recommendedName>
    <alternativeName>
        <fullName>IGP synthase glutaminase subunit 1</fullName>
        <ecNumber>3.5.1.2</ecNumber>
    </alternativeName>
    <alternativeName>
        <fullName>IGP synthase subunit HisH 1</fullName>
    </alternativeName>
    <alternativeName>
        <fullName>ImGP synthase subunit HisH 1</fullName>
        <shortName>IGPS subunit HisH 1</shortName>
    </alternativeName>
</protein>
<dbReference type="EC" id="4.3.2.10"/>
<dbReference type="EC" id="3.5.1.2"/>
<dbReference type="EMBL" id="BA000037">
    <property type="protein sequence ID" value="BAC94118.1"/>
    <property type="molecule type" value="Genomic_DNA"/>
</dbReference>
<dbReference type="SMR" id="Q7MLS3"/>
<dbReference type="STRING" id="672.VV93_v1c12670"/>
<dbReference type="KEGG" id="vvy:VV1354"/>
<dbReference type="eggNOG" id="COG0118">
    <property type="taxonomic scope" value="Bacteria"/>
</dbReference>
<dbReference type="HOGENOM" id="CLU_071837_0_0_6"/>
<dbReference type="UniPathway" id="UPA00031">
    <property type="reaction ID" value="UER00010"/>
</dbReference>
<dbReference type="Proteomes" id="UP000002675">
    <property type="component" value="Chromosome I"/>
</dbReference>
<dbReference type="GO" id="GO:0005737">
    <property type="term" value="C:cytoplasm"/>
    <property type="evidence" value="ECO:0007669"/>
    <property type="project" value="UniProtKB-SubCell"/>
</dbReference>
<dbReference type="GO" id="GO:0004359">
    <property type="term" value="F:glutaminase activity"/>
    <property type="evidence" value="ECO:0007669"/>
    <property type="project" value="UniProtKB-EC"/>
</dbReference>
<dbReference type="GO" id="GO:0000107">
    <property type="term" value="F:imidazoleglycerol-phosphate synthase activity"/>
    <property type="evidence" value="ECO:0007669"/>
    <property type="project" value="UniProtKB-UniRule"/>
</dbReference>
<dbReference type="GO" id="GO:0016829">
    <property type="term" value="F:lyase activity"/>
    <property type="evidence" value="ECO:0007669"/>
    <property type="project" value="UniProtKB-KW"/>
</dbReference>
<dbReference type="GO" id="GO:0000105">
    <property type="term" value="P:L-histidine biosynthetic process"/>
    <property type="evidence" value="ECO:0007669"/>
    <property type="project" value="UniProtKB-UniRule"/>
</dbReference>
<dbReference type="CDD" id="cd01748">
    <property type="entry name" value="GATase1_IGP_Synthase"/>
    <property type="match status" value="1"/>
</dbReference>
<dbReference type="FunFam" id="3.40.50.880:FF:000009">
    <property type="entry name" value="Imidazole glycerol phosphate synthase subunit HisH"/>
    <property type="match status" value="1"/>
</dbReference>
<dbReference type="Gene3D" id="3.40.50.880">
    <property type="match status" value="1"/>
</dbReference>
<dbReference type="HAMAP" id="MF_00278">
    <property type="entry name" value="HisH"/>
    <property type="match status" value="1"/>
</dbReference>
<dbReference type="InterPro" id="IPR029062">
    <property type="entry name" value="Class_I_gatase-like"/>
</dbReference>
<dbReference type="InterPro" id="IPR017926">
    <property type="entry name" value="GATASE"/>
</dbReference>
<dbReference type="InterPro" id="IPR010139">
    <property type="entry name" value="Imidazole-glycPsynth_HisH"/>
</dbReference>
<dbReference type="NCBIfam" id="TIGR01855">
    <property type="entry name" value="IMP_synth_hisH"/>
    <property type="match status" value="1"/>
</dbReference>
<dbReference type="PANTHER" id="PTHR42701">
    <property type="entry name" value="IMIDAZOLE GLYCEROL PHOSPHATE SYNTHASE SUBUNIT HISH"/>
    <property type="match status" value="1"/>
</dbReference>
<dbReference type="PANTHER" id="PTHR42701:SF1">
    <property type="entry name" value="IMIDAZOLE GLYCEROL PHOSPHATE SYNTHASE SUBUNIT HISH"/>
    <property type="match status" value="1"/>
</dbReference>
<dbReference type="Pfam" id="PF00117">
    <property type="entry name" value="GATase"/>
    <property type="match status" value="1"/>
</dbReference>
<dbReference type="PIRSF" id="PIRSF000495">
    <property type="entry name" value="Amidotransf_hisH"/>
    <property type="match status" value="1"/>
</dbReference>
<dbReference type="SUPFAM" id="SSF52317">
    <property type="entry name" value="Class I glutamine amidotransferase-like"/>
    <property type="match status" value="1"/>
</dbReference>
<dbReference type="PROSITE" id="PS51273">
    <property type="entry name" value="GATASE_TYPE_1"/>
    <property type="match status" value="1"/>
</dbReference>
<comment type="function">
    <text evidence="1">IGPS catalyzes the conversion of PRFAR and glutamine to IGP, AICAR and glutamate. The HisH subunit provides the glutamine amidotransferase activity that produces the ammonia necessary to HisF for the synthesis of IGP and AICAR (By similarity).</text>
</comment>
<comment type="catalytic activity">
    <reaction>
        <text>5-[(5-phospho-1-deoxy-D-ribulos-1-ylimino)methylamino]-1-(5-phospho-beta-D-ribosyl)imidazole-4-carboxamide + L-glutamine = D-erythro-1-(imidazol-4-yl)glycerol 3-phosphate + 5-amino-1-(5-phospho-beta-D-ribosyl)imidazole-4-carboxamide + L-glutamate + H(+)</text>
        <dbReference type="Rhea" id="RHEA:24793"/>
        <dbReference type="ChEBI" id="CHEBI:15378"/>
        <dbReference type="ChEBI" id="CHEBI:29985"/>
        <dbReference type="ChEBI" id="CHEBI:58278"/>
        <dbReference type="ChEBI" id="CHEBI:58359"/>
        <dbReference type="ChEBI" id="CHEBI:58475"/>
        <dbReference type="ChEBI" id="CHEBI:58525"/>
        <dbReference type="EC" id="4.3.2.10"/>
    </reaction>
</comment>
<comment type="catalytic activity">
    <reaction>
        <text>L-glutamine + H2O = L-glutamate + NH4(+)</text>
        <dbReference type="Rhea" id="RHEA:15889"/>
        <dbReference type="ChEBI" id="CHEBI:15377"/>
        <dbReference type="ChEBI" id="CHEBI:28938"/>
        <dbReference type="ChEBI" id="CHEBI:29985"/>
        <dbReference type="ChEBI" id="CHEBI:58359"/>
        <dbReference type="EC" id="3.5.1.2"/>
    </reaction>
</comment>
<comment type="pathway">
    <text>Amino-acid biosynthesis; L-histidine biosynthesis; L-histidine from 5-phospho-alpha-D-ribose 1-diphosphate: step 5/9.</text>
</comment>
<comment type="subunit">
    <text evidence="1">Heterodimer of HisH and HisF.</text>
</comment>
<comment type="subcellular location">
    <subcellularLocation>
        <location evidence="1">Cytoplasm</location>
    </subcellularLocation>
</comment>
<feature type="chain" id="PRO_0000152444" description="Imidazole glycerol phosphate synthase subunit HisH 1">
    <location>
        <begin position="1"/>
        <end position="204"/>
    </location>
</feature>
<feature type="domain" description="Glutamine amidotransferase type-1">
    <location>
        <begin position="5"/>
        <end position="204"/>
    </location>
</feature>
<feature type="active site" description="Nucleophile" evidence="1">
    <location>
        <position position="80"/>
    </location>
</feature>
<feature type="active site" evidence="1">
    <location>
        <position position="186"/>
    </location>
</feature>
<feature type="active site" evidence="1">
    <location>
        <position position="188"/>
    </location>
</feature>
<sequence>MTEQKVVIIDTGCANVSSVKFAIERLGYDVTISKDPQVVLSADKLFLPGVGTASEAMKNLEERDLISLVKQVEKPLLGICLGMQLLGKVSQEKGQKADELVECLGLCDGEVKLLQTGDLPLPHMGWNTVSAKAGNPLFKGIEEGEYFYFVHSFAMPVGDYTIAECEYGNSFTAAVQSGNYYGVQFHPERSSKAGAKLIQNFLEL</sequence>